<evidence type="ECO:0000255" key="1">
    <source>
        <dbReference type="HAMAP-Rule" id="MF_00540"/>
    </source>
</evidence>
<protein>
    <recommendedName>
        <fullName evidence="1">Adenosine deaminase</fullName>
        <ecNumber evidence="1">3.5.4.4</ecNumber>
    </recommendedName>
    <alternativeName>
        <fullName evidence="1">Adenosine aminohydrolase</fullName>
    </alternativeName>
</protein>
<organism>
    <name type="scientific">Shewanella halifaxensis (strain HAW-EB4)</name>
    <dbReference type="NCBI Taxonomy" id="458817"/>
    <lineage>
        <taxon>Bacteria</taxon>
        <taxon>Pseudomonadati</taxon>
        <taxon>Pseudomonadota</taxon>
        <taxon>Gammaproteobacteria</taxon>
        <taxon>Alteromonadales</taxon>
        <taxon>Shewanellaceae</taxon>
        <taxon>Shewanella</taxon>
    </lineage>
</organism>
<gene>
    <name evidence="1" type="primary">add</name>
    <name type="ordered locus">Shal_3477</name>
</gene>
<proteinExistence type="inferred from homology"/>
<feature type="chain" id="PRO_1000081932" description="Adenosine deaminase">
    <location>
        <begin position="1"/>
        <end position="331"/>
    </location>
</feature>
<feature type="active site" description="Proton donor" evidence="1">
    <location>
        <position position="200"/>
    </location>
</feature>
<feature type="binding site" evidence="1">
    <location>
        <position position="12"/>
    </location>
    <ligand>
        <name>Zn(2+)</name>
        <dbReference type="ChEBI" id="CHEBI:29105"/>
        <note>catalytic</note>
    </ligand>
</feature>
<feature type="binding site" evidence="1">
    <location>
        <position position="14"/>
    </location>
    <ligand>
        <name>substrate</name>
    </ligand>
</feature>
<feature type="binding site" evidence="1">
    <location>
        <position position="14"/>
    </location>
    <ligand>
        <name>Zn(2+)</name>
        <dbReference type="ChEBI" id="CHEBI:29105"/>
        <note>catalytic</note>
    </ligand>
</feature>
<feature type="binding site" evidence="1">
    <location>
        <position position="16"/>
    </location>
    <ligand>
        <name>substrate</name>
    </ligand>
</feature>
<feature type="binding site" evidence="1">
    <location>
        <position position="197"/>
    </location>
    <ligand>
        <name>Zn(2+)</name>
        <dbReference type="ChEBI" id="CHEBI:29105"/>
        <note>catalytic</note>
    </ligand>
</feature>
<feature type="binding site" evidence="1">
    <location>
        <position position="278"/>
    </location>
    <ligand>
        <name>Zn(2+)</name>
        <dbReference type="ChEBI" id="CHEBI:29105"/>
        <note>catalytic</note>
    </ligand>
</feature>
<feature type="site" description="Important for catalytic activity" evidence="1">
    <location>
        <position position="221"/>
    </location>
</feature>
<keyword id="KW-0378">Hydrolase</keyword>
<keyword id="KW-0479">Metal-binding</keyword>
<keyword id="KW-0546">Nucleotide metabolism</keyword>
<keyword id="KW-0862">Zinc</keyword>
<name>ADD_SHEHH</name>
<sequence>MNYLQLPKIDLHCHLDGSVRPQTVIDLAKIQGIDIPSDNVDDIKSLMVAPESCPNLDEYLTRFALPVSVMQTEAALERVSFELFEDAAKENVKYLEVRFGPQLHRKQGLNFEQIIGSVVKGMHRAEALYDIKGNYILSIIKVLPKDDINEVIDAGATFLNKGVVAFDLAASEEPGFCHEYIPYAKYALDKGYRITIHAGEQGVGQNVYDAISLLGAERIGHGIHINNHKDAYELVRAEAVALEACPSSNVQTKAVENIESHPFGDFYRDGLLVTINTDNRTVSDTTMTKELQLAAEKFNLSEQDYFQIYKISVENAFASDEVKQSLLKFIA</sequence>
<dbReference type="EC" id="3.5.4.4" evidence="1"/>
<dbReference type="EMBL" id="CP000931">
    <property type="protein sequence ID" value="ABZ78022.1"/>
    <property type="molecule type" value="Genomic_DNA"/>
</dbReference>
<dbReference type="RefSeq" id="WP_012278542.1">
    <property type="nucleotide sequence ID" value="NC_010334.1"/>
</dbReference>
<dbReference type="SMR" id="B0TT81"/>
<dbReference type="STRING" id="458817.Shal_3477"/>
<dbReference type="KEGG" id="shl:Shal_3477"/>
<dbReference type="eggNOG" id="COG1816">
    <property type="taxonomic scope" value="Bacteria"/>
</dbReference>
<dbReference type="HOGENOM" id="CLU_039228_0_0_6"/>
<dbReference type="OrthoDB" id="105475at2"/>
<dbReference type="Proteomes" id="UP000001317">
    <property type="component" value="Chromosome"/>
</dbReference>
<dbReference type="GO" id="GO:0005829">
    <property type="term" value="C:cytosol"/>
    <property type="evidence" value="ECO:0007669"/>
    <property type="project" value="TreeGrafter"/>
</dbReference>
<dbReference type="GO" id="GO:0046936">
    <property type="term" value="F:2'-deoxyadenosine deaminase activity"/>
    <property type="evidence" value="ECO:0007669"/>
    <property type="project" value="RHEA"/>
</dbReference>
<dbReference type="GO" id="GO:0004000">
    <property type="term" value="F:adenosine deaminase activity"/>
    <property type="evidence" value="ECO:0007669"/>
    <property type="project" value="UniProtKB-UniRule"/>
</dbReference>
<dbReference type="GO" id="GO:0008270">
    <property type="term" value="F:zinc ion binding"/>
    <property type="evidence" value="ECO:0007669"/>
    <property type="project" value="UniProtKB-UniRule"/>
</dbReference>
<dbReference type="GO" id="GO:0006154">
    <property type="term" value="P:adenosine catabolic process"/>
    <property type="evidence" value="ECO:0007669"/>
    <property type="project" value="TreeGrafter"/>
</dbReference>
<dbReference type="GO" id="GO:0043103">
    <property type="term" value="P:hypoxanthine salvage"/>
    <property type="evidence" value="ECO:0007669"/>
    <property type="project" value="TreeGrafter"/>
</dbReference>
<dbReference type="GO" id="GO:0046103">
    <property type="term" value="P:inosine biosynthetic process"/>
    <property type="evidence" value="ECO:0007669"/>
    <property type="project" value="TreeGrafter"/>
</dbReference>
<dbReference type="GO" id="GO:0009117">
    <property type="term" value="P:nucleotide metabolic process"/>
    <property type="evidence" value="ECO:0007669"/>
    <property type="project" value="UniProtKB-KW"/>
</dbReference>
<dbReference type="GO" id="GO:0009168">
    <property type="term" value="P:purine ribonucleoside monophosphate biosynthetic process"/>
    <property type="evidence" value="ECO:0007669"/>
    <property type="project" value="UniProtKB-UniRule"/>
</dbReference>
<dbReference type="CDD" id="cd01320">
    <property type="entry name" value="ADA"/>
    <property type="match status" value="1"/>
</dbReference>
<dbReference type="Gene3D" id="3.20.20.140">
    <property type="entry name" value="Metal-dependent hydrolases"/>
    <property type="match status" value="1"/>
</dbReference>
<dbReference type="HAMAP" id="MF_00540">
    <property type="entry name" value="A_deaminase"/>
    <property type="match status" value="1"/>
</dbReference>
<dbReference type="InterPro" id="IPR028893">
    <property type="entry name" value="A_deaminase"/>
</dbReference>
<dbReference type="InterPro" id="IPR001365">
    <property type="entry name" value="A_deaminase_dom"/>
</dbReference>
<dbReference type="InterPro" id="IPR006330">
    <property type="entry name" value="Ado/ade_deaminase"/>
</dbReference>
<dbReference type="InterPro" id="IPR032466">
    <property type="entry name" value="Metal_Hydrolase"/>
</dbReference>
<dbReference type="NCBIfam" id="TIGR01430">
    <property type="entry name" value="aden_deam"/>
    <property type="match status" value="1"/>
</dbReference>
<dbReference type="PANTHER" id="PTHR11409">
    <property type="entry name" value="ADENOSINE DEAMINASE"/>
    <property type="match status" value="1"/>
</dbReference>
<dbReference type="PANTHER" id="PTHR11409:SF43">
    <property type="entry name" value="ADENOSINE DEAMINASE"/>
    <property type="match status" value="1"/>
</dbReference>
<dbReference type="Pfam" id="PF00962">
    <property type="entry name" value="A_deaminase"/>
    <property type="match status" value="1"/>
</dbReference>
<dbReference type="SUPFAM" id="SSF51556">
    <property type="entry name" value="Metallo-dependent hydrolases"/>
    <property type="match status" value="1"/>
</dbReference>
<accession>B0TT81</accession>
<reference key="1">
    <citation type="submission" date="2008-01" db="EMBL/GenBank/DDBJ databases">
        <title>Complete sequence of Shewanella halifaxensis HAW-EB4.</title>
        <authorList>
            <consortium name="US DOE Joint Genome Institute"/>
            <person name="Copeland A."/>
            <person name="Lucas S."/>
            <person name="Lapidus A."/>
            <person name="Glavina del Rio T."/>
            <person name="Dalin E."/>
            <person name="Tice H."/>
            <person name="Bruce D."/>
            <person name="Goodwin L."/>
            <person name="Pitluck S."/>
            <person name="Sims D."/>
            <person name="Brettin T."/>
            <person name="Detter J.C."/>
            <person name="Han C."/>
            <person name="Kuske C.R."/>
            <person name="Schmutz J."/>
            <person name="Larimer F."/>
            <person name="Land M."/>
            <person name="Hauser L."/>
            <person name="Kyrpides N."/>
            <person name="Kim E."/>
            <person name="Zhao J.-S."/>
            <person name="Richardson P."/>
        </authorList>
    </citation>
    <scope>NUCLEOTIDE SEQUENCE [LARGE SCALE GENOMIC DNA]</scope>
    <source>
        <strain>HAW-EB4</strain>
    </source>
</reference>
<comment type="function">
    <text evidence="1">Catalyzes the hydrolytic deamination of adenosine and 2-deoxyadenosine.</text>
</comment>
<comment type="catalytic activity">
    <reaction evidence="1">
        <text>adenosine + H2O + H(+) = inosine + NH4(+)</text>
        <dbReference type="Rhea" id="RHEA:24408"/>
        <dbReference type="ChEBI" id="CHEBI:15377"/>
        <dbReference type="ChEBI" id="CHEBI:15378"/>
        <dbReference type="ChEBI" id="CHEBI:16335"/>
        <dbReference type="ChEBI" id="CHEBI:17596"/>
        <dbReference type="ChEBI" id="CHEBI:28938"/>
        <dbReference type="EC" id="3.5.4.4"/>
    </reaction>
    <physiologicalReaction direction="left-to-right" evidence="1">
        <dbReference type="Rhea" id="RHEA:24409"/>
    </physiologicalReaction>
</comment>
<comment type="catalytic activity">
    <reaction evidence="1">
        <text>2'-deoxyadenosine + H2O + H(+) = 2'-deoxyinosine + NH4(+)</text>
        <dbReference type="Rhea" id="RHEA:28190"/>
        <dbReference type="ChEBI" id="CHEBI:15377"/>
        <dbReference type="ChEBI" id="CHEBI:15378"/>
        <dbReference type="ChEBI" id="CHEBI:17256"/>
        <dbReference type="ChEBI" id="CHEBI:28938"/>
        <dbReference type="ChEBI" id="CHEBI:28997"/>
        <dbReference type="EC" id="3.5.4.4"/>
    </reaction>
    <physiologicalReaction direction="left-to-right" evidence="1">
        <dbReference type="Rhea" id="RHEA:28191"/>
    </physiologicalReaction>
</comment>
<comment type="cofactor">
    <cofactor evidence="1">
        <name>Zn(2+)</name>
        <dbReference type="ChEBI" id="CHEBI:29105"/>
    </cofactor>
    <text evidence="1">Binds 1 zinc ion per subunit.</text>
</comment>
<comment type="similarity">
    <text evidence="1">Belongs to the metallo-dependent hydrolases superfamily. Adenosine and AMP deaminases family. Adenosine deaminase subfamily.</text>
</comment>